<evidence type="ECO:0000250" key="1"/>
<evidence type="ECO:0000305" key="2"/>
<protein>
    <recommendedName>
        <fullName evidence="2">Small ribosomal subunit protein uS4c</fullName>
    </recommendedName>
    <alternativeName>
        <fullName>Plastid 30S ribosomal protein S4</fullName>
    </alternativeName>
</protein>
<keyword id="KW-0934">Plastid</keyword>
<keyword id="KW-0687">Ribonucleoprotein</keyword>
<keyword id="KW-0689">Ribosomal protein</keyword>
<keyword id="KW-0694">RNA-binding</keyword>
<keyword id="KW-0699">rRNA-binding</keyword>
<geneLocation type="non-photosynthetic plastid"/>
<dbReference type="EMBL" id="M81884">
    <property type="protein sequence ID" value="AAA65853.1"/>
    <property type="molecule type" value="Genomic_DNA"/>
</dbReference>
<dbReference type="PIR" id="S78382">
    <property type="entry name" value="S78382"/>
</dbReference>
<dbReference type="RefSeq" id="NP_054379.1">
    <property type="nucleotide sequence ID" value="NC_001568.1"/>
</dbReference>
<dbReference type="SMR" id="P30056"/>
<dbReference type="GeneID" id="801419"/>
<dbReference type="GO" id="GO:0009536">
    <property type="term" value="C:plastid"/>
    <property type="evidence" value="ECO:0007669"/>
    <property type="project" value="UniProtKB-SubCell"/>
</dbReference>
<dbReference type="GO" id="GO:0015935">
    <property type="term" value="C:small ribosomal subunit"/>
    <property type="evidence" value="ECO:0007669"/>
    <property type="project" value="InterPro"/>
</dbReference>
<dbReference type="GO" id="GO:0019843">
    <property type="term" value="F:rRNA binding"/>
    <property type="evidence" value="ECO:0007669"/>
    <property type="project" value="UniProtKB-KW"/>
</dbReference>
<dbReference type="GO" id="GO:0003735">
    <property type="term" value="F:structural constituent of ribosome"/>
    <property type="evidence" value="ECO:0007669"/>
    <property type="project" value="InterPro"/>
</dbReference>
<dbReference type="GO" id="GO:0042274">
    <property type="term" value="P:ribosomal small subunit biogenesis"/>
    <property type="evidence" value="ECO:0007669"/>
    <property type="project" value="TreeGrafter"/>
</dbReference>
<dbReference type="GO" id="GO:0006412">
    <property type="term" value="P:translation"/>
    <property type="evidence" value="ECO:0007669"/>
    <property type="project" value="InterPro"/>
</dbReference>
<dbReference type="CDD" id="cd00165">
    <property type="entry name" value="S4"/>
    <property type="match status" value="1"/>
</dbReference>
<dbReference type="FunFam" id="1.10.1050.10:FF:000002">
    <property type="entry name" value="30S ribosomal protein S4, chloroplastic"/>
    <property type="match status" value="1"/>
</dbReference>
<dbReference type="FunFam" id="3.10.290.10:FF:000081">
    <property type="entry name" value="30S ribosomal protein S4, chloroplastic"/>
    <property type="match status" value="1"/>
</dbReference>
<dbReference type="Gene3D" id="1.10.1050.10">
    <property type="entry name" value="Ribosomal Protein S4 Delta 41, Chain A, domain 1"/>
    <property type="match status" value="1"/>
</dbReference>
<dbReference type="Gene3D" id="3.10.290.10">
    <property type="entry name" value="RNA-binding S4 domain"/>
    <property type="match status" value="1"/>
</dbReference>
<dbReference type="HAMAP" id="MF_01306_B">
    <property type="entry name" value="Ribosomal_uS4_B"/>
    <property type="match status" value="1"/>
</dbReference>
<dbReference type="InterPro" id="IPR022801">
    <property type="entry name" value="Ribosomal_uS4"/>
</dbReference>
<dbReference type="InterPro" id="IPR005709">
    <property type="entry name" value="Ribosomal_uS4_bac-type"/>
</dbReference>
<dbReference type="InterPro" id="IPR018079">
    <property type="entry name" value="Ribosomal_uS4_CS"/>
</dbReference>
<dbReference type="InterPro" id="IPR001912">
    <property type="entry name" value="Ribosomal_uS4_N"/>
</dbReference>
<dbReference type="InterPro" id="IPR002942">
    <property type="entry name" value="S4_RNA-bd"/>
</dbReference>
<dbReference type="InterPro" id="IPR036986">
    <property type="entry name" value="S4_RNA-bd_sf"/>
</dbReference>
<dbReference type="NCBIfam" id="NF003717">
    <property type="entry name" value="PRK05327.1"/>
    <property type="match status" value="1"/>
</dbReference>
<dbReference type="NCBIfam" id="TIGR01017">
    <property type="entry name" value="rpsD_bact"/>
    <property type="match status" value="1"/>
</dbReference>
<dbReference type="PANTHER" id="PTHR11831">
    <property type="entry name" value="30S 40S RIBOSOMAL PROTEIN"/>
    <property type="match status" value="1"/>
</dbReference>
<dbReference type="PANTHER" id="PTHR11831:SF4">
    <property type="entry name" value="SMALL RIBOSOMAL SUBUNIT PROTEIN US4M"/>
    <property type="match status" value="1"/>
</dbReference>
<dbReference type="Pfam" id="PF00163">
    <property type="entry name" value="Ribosomal_S4"/>
    <property type="match status" value="1"/>
</dbReference>
<dbReference type="Pfam" id="PF01479">
    <property type="entry name" value="S4"/>
    <property type="match status" value="1"/>
</dbReference>
<dbReference type="SMART" id="SM01390">
    <property type="entry name" value="Ribosomal_S4"/>
    <property type="match status" value="1"/>
</dbReference>
<dbReference type="SMART" id="SM00363">
    <property type="entry name" value="S4"/>
    <property type="match status" value="1"/>
</dbReference>
<dbReference type="SUPFAM" id="SSF55174">
    <property type="entry name" value="Alpha-L RNA-binding motif"/>
    <property type="match status" value="1"/>
</dbReference>
<dbReference type="PROSITE" id="PS00632">
    <property type="entry name" value="RIBOSOMAL_S4"/>
    <property type="match status" value="1"/>
</dbReference>
<dbReference type="PROSITE" id="PS50889">
    <property type="entry name" value="S4"/>
    <property type="match status" value="1"/>
</dbReference>
<name>RR4_EPIVI</name>
<feature type="chain" id="PRO_0000132572" description="Small ribosomal subunit protein uS4c">
    <location>
        <begin position="1"/>
        <end position="202"/>
    </location>
</feature>
<feature type="domain" description="S4 RNA-binding">
    <location>
        <begin position="89"/>
        <end position="152"/>
    </location>
</feature>
<gene>
    <name type="primary">rps4</name>
</gene>
<comment type="function">
    <text evidence="1">One of the primary rRNA binding proteins, it binds directly to 16S rRNA where it nucleates assembly of the body of the 30S subunit.</text>
</comment>
<comment type="function">
    <text evidence="1">With S5 and S12 plays an important role in translational accuracy.</text>
</comment>
<comment type="subunit">
    <text evidence="1">Part of the 30S ribosomal subunit. Contacts protein S5. The interaction surface between S4 and S5 is involved in control of translational fidelity (By similarity).</text>
</comment>
<comment type="subcellular location">
    <subcellularLocation>
        <location>Plastid</location>
    </subcellularLocation>
</comment>
<comment type="similarity">
    <text evidence="2">Belongs to the universal ribosomal protein uS4 family.</text>
</comment>
<sequence>MSRYRGPSLKKIRRLGALPGLTNKRSKAENDFIKKLRSDKKSQYRIRLEEKQKLRFNYGLRERQLRKYFSIAIKTRGSTGKVLMQLLEMRLDNIIFRLGMASTIPAARQLVNHRHVLVNGRIVDIPSYRCKSRDIIMARDEQQSNTFINNCINYSTHNRMEAPNHLTLLHPFKGLVNQIIDSKWVGFKINELLVVEYYFRKT</sequence>
<organism>
    <name type="scientific">Epifagus virginiana</name>
    <name type="common">Beechdrops</name>
    <name type="synonym">Orobanche virginiana</name>
    <dbReference type="NCBI Taxonomy" id="4177"/>
    <lineage>
        <taxon>Eukaryota</taxon>
        <taxon>Viridiplantae</taxon>
        <taxon>Streptophyta</taxon>
        <taxon>Embryophyta</taxon>
        <taxon>Tracheophyta</taxon>
        <taxon>Spermatophyta</taxon>
        <taxon>Magnoliopsida</taxon>
        <taxon>eudicotyledons</taxon>
        <taxon>Gunneridae</taxon>
        <taxon>Pentapetalae</taxon>
        <taxon>asterids</taxon>
        <taxon>lamiids</taxon>
        <taxon>Lamiales</taxon>
        <taxon>Orobanchaceae</taxon>
        <taxon>Orobancheae</taxon>
        <taxon>Epifagus</taxon>
    </lineage>
</organism>
<proteinExistence type="inferred from homology"/>
<accession>P30056</accession>
<reference key="1">
    <citation type="journal article" date="1992" name="Proc. Natl. Acad. Sci. U.S.A.">
        <title>Function and evolution of a minimal plastid genome from a nonphotosynthetic parasitic plant.</title>
        <authorList>
            <person name="Wolfe K.H."/>
            <person name="Morden C.W."/>
            <person name="Palmer J.D."/>
        </authorList>
    </citation>
    <scope>NUCLEOTIDE SEQUENCE [LARGE SCALE GENOMIC DNA]</scope>
</reference>
<reference key="2">
    <citation type="journal article" date="1992" name="J. Mol. Evol.">
        <title>Rapid evolution of the plastid translational apparatus in a nonphotosynthetic plant: loss or accelerated sequence evolution of tRNA and ribosomal protein genes.</title>
        <authorList>
            <person name="Wolfe K.H."/>
            <person name="Morden C.W."/>
            <person name="Ems S.C."/>
            <person name="Palmer J.D."/>
        </authorList>
    </citation>
    <scope>NUCLEOTIDE SEQUENCE [GENOMIC DNA]</scope>
</reference>